<dbReference type="EC" id="1.1.1.267" evidence="1"/>
<dbReference type="EMBL" id="CP000075">
    <property type="protein sequence ID" value="AAY36400.1"/>
    <property type="molecule type" value="Genomic_DNA"/>
</dbReference>
<dbReference type="RefSeq" id="WP_011266975.1">
    <property type="nucleotide sequence ID" value="NC_007005.1"/>
</dbReference>
<dbReference type="RefSeq" id="YP_234438.1">
    <property type="nucleotide sequence ID" value="NC_007005.1"/>
</dbReference>
<dbReference type="SMR" id="Q4ZWS2"/>
<dbReference type="STRING" id="205918.Psyr_1349"/>
<dbReference type="KEGG" id="psb:Psyr_1349"/>
<dbReference type="PATRIC" id="fig|205918.7.peg.1382"/>
<dbReference type="eggNOG" id="COG0743">
    <property type="taxonomic scope" value="Bacteria"/>
</dbReference>
<dbReference type="HOGENOM" id="CLU_035714_4_0_6"/>
<dbReference type="OrthoDB" id="9806546at2"/>
<dbReference type="UniPathway" id="UPA00056">
    <property type="reaction ID" value="UER00092"/>
</dbReference>
<dbReference type="Proteomes" id="UP000000426">
    <property type="component" value="Chromosome"/>
</dbReference>
<dbReference type="GO" id="GO:0030604">
    <property type="term" value="F:1-deoxy-D-xylulose-5-phosphate reductoisomerase activity"/>
    <property type="evidence" value="ECO:0007669"/>
    <property type="project" value="UniProtKB-UniRule"/>
</dbReference>
<dbReference type="GO" id="GO:0030145">
    <property type="term" value="F:manganese ion binding"/>
    <property type="evidence" value="ECO:0007669"/>
    <property type="project" value="TreeGrafter"/>
</dbReference>
<dbReference type="GO" id="GO:0070402">
    <property type="term" value="F:NADPH binding"/>
    <property type="evidence" value="ECO:0007669"/>
    <property type="project" value="InterPro"/>
</dbReference>
<dbReference type="GO" id="GO:0051484">
    <property type="term" value="P:isopentenyl diphosphate biosynthetic process, methylerythritol 4-phosphate pathway involved in terpenoid biosynthetic process"/>
    <property type="evidence" value="ECO:0007669"/>
    <property type="project" value="TreeGrafter"/>
</dbReference>
<dbReference type="FunFam" id="3.40.50.720:FF:000045">
    <property type="entry name" value="1-deoxy-D-xylulose 5-phosphate reductoisomerase"/>
    <property type="match status" value="1"/>
</dbReference>
<dbReference type="Gene3D" id="1.10.1740.10">
    <property type="match status" value="1"/>
</dbReference>
<dbReference type="Gene3D" id="3.40.50.720">
    <property type="entry name" value="NAD(P)-binding Rossmann-like Domain"/>
    <property type="match status" value="1"/>
</dbReference>
<dbReference type="HAMAP" id="MF_00183">
    <property type="entry name" value="DXP_reductoisom"/>
    <property type="match status" value="1"/>
</dbReference>
<dbReference type="InterPro" id="IPR003821">
    <property type="entry name" value="DXP_reductoisomerase"/>
</dbReference>
<dbReference type="InterPro" id="IPR013644">
    <property type="entry name" value="DXP_reductoisomerase_C"/>
</dbReference>
<dbReference type="InterPro" id="IPR013512">
    <property type="entry name" value="DXP_reductoisomerase_N"/>
</dbReference>
<dbReference type="InterPro" id="IPR026877">
    <property type="entry name" value="DXPR_C"/>
</dbReference>
<dbReference type="InterPro" id="IPR036169">
    <property type="entry name" value="DXPR_C_sf"/>
</dbReference>
<dbReference type="InterPro" id="IPR036291">
    <property type="entry name" value="NAD(P)-bd_dom_sf"/>
</dbReference>
<dbReference type="NCBIfam" id="TIGR00243">
    <property type="entry name" value="Dxr"/>
    <property type="match status" value="1"/>
</dbReference>
<dbReference type="NCBIfam" id="NF003938">
    <property type="entry name" value="PRK05447.1-1"/>
    <property type="match status" value="1"/>
</dbReference>
<dbReference type="NCBIfam" id="NF009114">
    <property type="entry name" value="PRK12464.1"/>
    <property type="match status" value="1"/>
</dbReference>
<dbReference type="PANTHER" id="PTHR30525">
    <property type="entry name" value="1-DEOXY-D-XYLULOSE 5-PHOSPHATE REDUCTOISOMERASE"/>
    <property type="match status" value="1"/>
</dbReference>
<dbReference type="PANTHER" id="PTHR30525:SF0">
    <property type="entry name" value="1-DEOXY-D-XYLULOSE 5-PHOSPHATE REDUCTOISOMERASE, CHLOROPLASTIC"/>
    <property type="match status" value="1"/>
</dbReference>
<dbReference type="Pfam" id="PF08436">
    <property type="entry name" value="DXP_redisom_C"/>
    <property type="match status" value="1"/>
</dbReference>
<dbReference type="Pfam" id="PF02670">
    <property type="entry name" value="DXP_reductoisom"/>
    <property type="match status" value="1"/>
</dbReference>
<dbReference type="Pfam" id="PF13288">
    <property type="entry name" value="DXPR_C"/>
    <property type="match status" value="1"/>
</dbReference>
<dbReference type="PIRSF" id="PIRSF006205">
    <property type="entry name" value="Dxp_reductismrs"/>
    <property type="match status" value="1"/>
</dbReference>
<dbReference type="SUPFAM" id="SSF69055">
    <property type="entry name" value="1-deoxy-D-xylulose-5-phosphate reductoisomerase, C-terminal domain"/>
    <property type="match status" value="1"/>
</dbReference>
<dbReference type="SUPFAM" id="SSF55347">
    <property type="entry name" value="Glyceraldehyde-3-phosphate dehydrogenase-like, C-terminal domain"/>
    <property type="match status" value="1"/>
</dbReference>
<dbReference type="SUPFAM" id="SSF51735">
    <property type="entry name" value="NAD(P)-binding Rossmann-fold domains"/>
    <property type="match status" value="1"/>
</dbReference>
<name>DXR_PSEU2</name>
<organism>
    <name type="scientific">Pseudomonas syringae pv. syringae (strain B728a)</name>
    <dbReference type="NCBI Taxonomy" id="205918"/>
    <lineage>
        <taxon>Bacteria</taxon>
        <taxon>Pseudomonadati</taxon>
        <taxon>Pseudomonadota</taxon>
        <taxon>Gammaproteobacteria</taxon>
        <taxon>Pseudomonadales</taxon>
        <taxon>Pseudomonadaceae</taxon>
        <taxon>Pseudomonas</taxon>
        <taxon>Pseudomonas syringae</taxon>
    </lineage>
</organism>
<comment type="function">
    <text evidence="1">Catalyzes the NADPH-dependent rearrangement and reduction of 1-deoxy-D-xylulose-5-phosphate (DXP) to 2-C-methyl-D-erythritol 4-phosphate (MEP).</text>
</comment>
<comment type="catalytic activity">
    <reaction evidence="1">
        <text>2-C-methyl-D-erythritol 4-phosphate + NADP(+) = 1-deoxy-D-xylulose 5-phosphate + NADPH + H(+)</text>
        <dbReference type="Rhea" id="RHEA:13717"/>
        <dbReference type="ChEBI" id="CHEBI:15378"/>
        <dbReference type="ChEBI" id="CHEBI:57783"/>
        <dbReference type="ChEBI" id="CHEBI:57792"/>
        <dbReference type="ChEBI" id="CHEBI:58262"/>
        <dbReference type="ChEBI" id="CHEBI:58349"/>
        <dbReference type="EC" id="1.1.1.267"/>
    </reaction>
    <physiologicalReaction direction="right-to-left" evidence="1">
        <dbReference type="Rhea" id="RHEA:13719"/>
    </physiologicalReaction>
</comment>
<comment type="cofactor">
    <cofactor evidence="1">
        <name>Mg(2+)</name>
        <dbReference type="ChEBI" id="CHEBI:18420"/>
    </cofactor>
    <cofactor evidence="1">
        <name>Mn(2+)</name>
        <dbReference type="ChEBI" id="CHEBI:29035"/>
    </cofactor>
</comment>
<comment type="pathway">
    <text evidence="1">Isoprenoid biosynthesis; isopentenyl diphosphate biosynthesis via DXP pathway; isopentenyl diphosphate from 1-deoxy-D-xylulose 5-phosphate: step 1/6.</text>
</comment>
<comment type="similarity">
    <text evidence="1">Belongs to the DXR family.</text>
</comment>
<keyword id="KW-0414">Isoprene biosynthesis</keyword>
<keyword id="KW-0464">Manganese</keyword>
<keyword id="KW-0479">Metal-binding</keyword>
<keyword id="KW-0521">NADP</keyword>
<keyword id="KW-0560">Oxidoreductase</keyword>
<accession>Q4ZWS2</accession>
<evidence type="ECO:0000255" key="1">
    <source>
        <dbReference type="HAMAP-Rule" id="MF_00183"/>
    </source>
</evidence>
<reference key="1">
    <citation type="journal article" date="2005" name="Proc. Natl. Acad. Sci. U.S.A.">
        <title>Comparison of the complete genome sequences of Pseudomonas syringae pv. syringae B728a and pv. tomato DC3000.</title>
        <authorList>
            <person name="Feil H."/>
            <person name="Feil W.S."/>
            <person name="Chain P."/>
            <person name="Larimer F."/>
            <person name="Dibartolo G."/>
            <person name="Copeland A."/>
            <person name="Lykidis A."/>
            <person name="Trong S."/>
            <person name="Nolan M."/>
            <person name="Goltsman E."/>
            <person name="Thiel J."/>
            <person name="Malfatti S."/>
            <person name="Loper J.E."/>
            <person name="Lapidus A."/>
            <person name="Detter J.C."/>
            <person name="Land M."/>
            <person name="Richardson P.M."/>
            <person name="Kyrpides N.C."/>
            <person name="Ivanova N."/>
            <person name="Lindow S.E."/>
        </authorList>
    </citation>
    <scope>NUCLEOTIDE SEQUENCE [LARGE SCALE GENOMIC DNA]</scope>
    <source>
        <strain>B728a</strain>
    </source>
</reference>
<proteinExistence type="inferred from homology"/>
<protein>
    <recommendedName>
        <fullName evidence="1">1-deoxy-D-xylulose 5-phosphate reductoisomerase</fullName>
        <shortName evidence="1">DXP reductoisomerase</shortName>
        <ecNumber evidence="1">1.1.1.267</ecNumber>
    </recommendedName>
    <alternativeName>
        <fullName evidence="1">1-deoxyxylulose-5-phosphate reductoisomerase</fullName>
    </alternativeName>
    <alternativeName>
        <fullName evidence="1">2-C-methyl-D-erythritol 4-phosphate synthase</fullName>
    </alternativeName>
</protein>
<sequence>MSGPQQISILGATGSIGLSTLDVVARHPALYQVFALTGFSRLDELLALCIRHTPQYAVVPDQVVARKLQDDLAAAGLDTRVLVGEGGLCEVAADPRVDAVMAAIVGAAGLRPTLAAVEAGKKVLLANKEALVMSGALFMQAVRQNGAVLLPIDSEHNAIFQCLPGDFARGLGAVGVRRIMLTASGGPFRETPLEQLHNVTPEQACAHPVWSMGRKISVDSATMMNKGLELIEACWLFDARPDQVEVVIHPQSVIHSLVDYVDGSVLAQLGNPDMRTPIANALAWPARVDSGVAPLDLFRIGQLDFQAPDEERFPCLRLARQAAEAGGSAPAMLNAANEVAVAAFLDGRIRYLEIAGIIEEVLDHEPVTAVEGLEAVFAADAKARLLAGQWFERHGR</sequence>
<feature type="chain" id="PRO_0000163700" description="1-deoxy-D-xylulose 5-phosphate reductoisomerase">
    <location>
        <begin position="1"/>
        <end position="396"/>
    </location>
</feature>
<feature type="binding site" evidence="1">
    <location>
        <position position="13"/>
    </location>
    <ligand>
        <name>NADPH</name>
        <dbReference type="ChEBI" id="CHEBI:57783"/>
    </ligand>
</feature>
<feature type="binding site" evidence="1">
    <location>
        <position position="14"/>
    </location>
    <ligand>
        <name>NADPH</name>
        <dbReference type="ChEBI" id="CHEBI:57783"/>
    </ligand>
</feature>
<feature type="binding site" evidence="1">
    <location>
        <position position="15"/>
    </location>
    <ligand>
        <name>NADPH</name>
        <dbReference type="ChEBI" id="CHEBI:57783"/>
    </ligand>
</feature>
<feature type="binding site" evidence="1">
    <location>
        <position position="16"/>
    </location>
    <ligand>
        <name>NADPH</name>
        <dbReference type="ChEBI" id="CHEBI:57783"/>
    </ligand>
</feature>
<feature type="binding site" evidence="1">
    <location>
        <position position="127"/>
    </location>
    <ligand>
        <name>NADPH</name>
        <dbReference type="ChEBI" id="CHEBI:57783"/>
    </ligand>
</feature>
<feature type="binding site" evidence="1">
    <location>
        <position position="128"/>
    </location>
    <ligand>
        <name>1-deoxy-D-xylulose 5-phosphate</name>
        <dbReference type="ChEBI" id="CHEBI:57792"/>
    </ligand>
</feature>
<feature type="binding site" evidence="1">
    <location>
        <position position="129"/>
    </location>
    <ligand>
        <name>NADPH</name>
        <dbReference type="ChEBI" id="CHEBI:57783"/>
    </ligand>
</feature>
<feature type="binding site" evidence="1">
    <location>
        <position position="153"/>
    </location>
    <ligand>
        <name>Mn(2+)</name>
        <dbReference type="ChEBI" id="CHEBI:29035"/>
    </ligand>
</feature>
<feature type="binding site" evidence="1">
    <location>
        <position position="154"/>
    </location>
    <ligand>
        <name>1-deoxy-D-xylulose 5-phosphate</name>
        <dbReference type="ChEBI" id="CHEBI:57792"/>
    </ligand>
</feature>
<feature type="binding site" evidence="1">
    <location>
        <position position="155"/>
    </location>
    <ligand>
        <name>1-deoxy-D-xylulose 5-phosphate</name>
        <dbReference type="ChEBI" id="CHEBI:57792"/>
    </ligand>
</feature>
<feature type="binding site" evidence="1">
    <location>
        <position position="155"/>
    </location>
    <ligand>
        <name>Mn(2+)</name>
        <dbReference type="ChEBI" id="CHEBI:29035"/>
    </ligand>
</feature>
<feature type="binding site" evidence="1">
    <location>
        <position position="184"/>
    </location>
    <ligand>
        <name>1-deoxy-D-xylulose 5-phosphate</name>
        <dbReference type="ChEBI" id="CHEBI:57792"/>
    </ligand>
</feature>
<feature type="binding site" evidence="1">
    <location>
        <position position="207"/>
    </location>
    <ligand>
        <name>1-deoxy-D-xylulose 5-phosphate</name>
        <dbReference type="ChEBI" id="CHEBI:57792"/>
    </ligand>
</feature>
<feature type="binding site" evidence="1">
    <location>
        <position position="213"/>
    </location>
    <ligand>
        <name>NADPH</name>
        <dbReference type="ChEBI" id="CHEBI:57783"/>
    </ligand>
</feature>
<feature type="binding site" evidence="1">
    <location>
        <position position="220"/>
    </location>
    <ligand>
        <name>1-deoxy-D-xylulose 5-phosphate</name>
        <dbReference type="ChEBI" id="CHEBI:57792"/>
    </ligand>
</feature>
<feature type="binding site" evidence="1">
    <location>
        <position position="225"/>
    </location>
    <ligand>
        <name>1-deoxy-D-xylulose 5-phosphate</name>
        <dbReference type="ChEBI" id="CHEBI:57792"/>
    </ligand>
</feature>
<feature type="binding site" evidence="1">
    <location>
        <position position="226"/>
    </location>
    <ligand>
        <name>1-deoxy-D-xylulose 5-phosphate</name>
        <dbReference type="ChEBI" id="CHEBI:57792"/>
    </ligand>
</feature>
<feature type="binding site" evidence="1">
    <location>
        <position position="229"/>
    </location>
    <ligand>
        <name>1-deoxy-D-xylulose 5-phosphate</name>
        <dbReference type="ChEBI" id="CHEBI:57792"/>
    </ligand>
</feature>
<feature type="binding site" evidence="1">
    <location>
        <position position="229"/>
    </location>
    <ligand>
        <name>Mn(2+)</name>
        <dbReference type="ChEBI" id="CHEBI:29035"/>
    </ligand>
</feature>
<gene>
    <name evidence="1" type="primary">dxr</name>
    <name type="ordered locus">Psyr_1349</name>
</gene>